<dbReference type="EMBL" id="CH954179">
    <property type="protein sequence ID" value="EDV55805.1"/>
    <property type="molecule type" value="Genomic_DNA"/>
</dbReference>
<dbReference type="SMR" id="B3NPV8"/>
<dbReference type="EnsemblMetazoa" id="FBtr0140632">
    <property type="protein sequence ID" value="FBpp0139124"/>
    <property type="gene ID" value="FBgn0112768"/>
</dbReference>
<dbReference type="EnsemblMetazoa" id="XM_001975369.3">
    <property type="protein sequence ID" value="XP_001975405.1"/>
    <property type="gene ID" value="LOC6548523"/>
</dbReference>
<dbReference type="GeneID" id="6548523"/>
<dbReference type="KEGG" id="der:6548523"/>
<dbReference type="CTD" id="1191"/>
<dbReference type="eggNOG" id="KOG1839">
    <property type="taxonomic scope" value="Eukaryota"/>
</dbReference>
<dbReference type="HOGENOM" id="CLU_003256_1_0_1"/>
<dbReference type="OMA" id="HPVWDKD"/>
<dbReference type="OrthoDB" id="1414216at2759"/>
<dbReference type="PhylomeDB" id="B3NPV8"/>
<dbReference type="Proteomes" id="UP000008711">
    <property type="component" value="Unassembled WGS sequence"/>
</dbReference>
<dbReference type="GO" id="GO:0005829">
    <property type="term" value="C:cytosol"/>
    <property type="evidence" value="ECO:0007669"/>
    <property type="project" value="EnsemblMetazoa"/>
</dbReference>
<dbReference type="GO" id="GO:0003729">
    <property type="term" value="F:mRNA binding"/>
    <property type="evidence" value="ECO:0007669"/>
    <property type="project" value="EnsemblMetazoa"/>
</dbReference>
<dbReference type="GO" id="GO:0043022">
    <property type="term" value="F:ribosome binding"/>
    <property type="evidence" value="ECO:0007669"/>
    <property type="project" value="EnsemblMetazoa"/>
</dbReference>
<dbReference type="GO" id="GO:0055059">
    <property type="term" value="P:asymmetric neuroblast division"/>
    <property type="evidence" value="ECO:0007669"/>
    <property type="project" value="EnsemblMetazoa"/>
</dbReference>
<dbReference type="GO" id="GO:0048312">
    <property type="term" value="P:intracellular distribution of mitochondria"/>
    <property type="evidence" value="ECO:0007669"/>
    <property type="project" value="TreeGrafter"/>
</dbReference>
<dbReference type="GO" id="GO:0007005">
    <property type="term" value="P:mitochondrion organization"/>
    <property type="evidence" value="ECO:0007669"/>
    <property type="project" value="UniProtKB-UniRule"/>
</dbReference>
<dbReference type="GO" id="GO:0033750">
    <property type="term" value="P:ribosome localization"/>
    <property type="evidence" value="ECO:0007669"/>
    <property type="project" value="EnsemblMetazoa"/>
</dbReference>
<dbReference type="CDD" id="cd15466">
    <property type="entry name" value="CLU-central"/>
    <property type="match status" value="1"/>
</dbReference>
<dbReference type="FunFam" id="3.30.2280.10:FF:000001">
    <property type="entry name" value="Clustered mitochondria (CluA/CLU1) homolog"/>
    <property type="match status" value="1"/>
</dbReference>
<dbReference type="FunFam" id="1.25.40.10:FF:000099">
    <property type="entry name" value="Clustered mitochondria protein homolog"/>
    <property type="match status" value="1"/>
</dbReference>
<dbReference type="Gene3D" id="3.30.2280.10">
    <property type="entry name" value="Hypothetical protein (hspc210)"/>
    <property type="match status" value="1"/>
</dbReference>
<dbReference type="Gene3D" id="1.25.40.10">
    <property type="entry name" value="Tetratricopeptide repeat domain"/>
    <property type="match status" value="2"/>
</dbReference>
<dbReference type="HAMAP" id="MF_03013">
    <property type="entry name" value="CLU"/>
    <property type="match status" value="1"/>
</dbReference>
<dbReference type="InterPro" id="IPR033646">
    <property type="entry name" value="CLU-central"/>
</dbReference>
<dbReference type="InterPro" id="IPR025697">
    <property type="entry name" value="CLU_dom"/>
</dbReference>
<dbReference type="InterPro" id="IPR028275">
    <property type="entry name" value="CLU_N"/>
</dbReference>
<dbReference type="InterPro" id="IPR027523">
    <property type="entry name" value="CLU_prot"/>
</dbReference>
<dbReference type="InterPro" id="IPR007967">
    <property type="entry name" value="GSKIP_dom"/>
</dbReference>
<dbReference type="InterPro" id="IPR023231">
    <property type="entry name" value="GSKIP_dom_sf"/>
</dbReference>
<dbReference type="InterPro" id="IPR011990">
    <property type="entry name" value="TPR-like_helical_dom_sf"/>
</dbReference>
<dbReference type="PANTHER" id="PTHR12601:SF6">
    <property type="entry name" value="CLUSTERED MITOCHONDRIA PROTEIN HOMOLOG"/>
    <property type="match status" value="1"/>
</dbReference>
<dbReference type="PANTHER" id="PTHR12601">
    <property type="entry name" value="EUKARYOTIC TRANSLATION INITIATION FACTOR 3 SUBUNIT EIF-3"/>
    <property type="match status" value="1"/>
</dbReference>
<dbReference type="Pfam" id="PF13236">
    <property type="entry name" value="CLU"/>
    <property type="match status" value="1"/>
</dbReference>
<dbReference type="Pfam" id="PF15044">
    <property type="entry name" value="CLU_N"/>
    <property type="match status" value="1"/>
</dbReference>
<dbReference type="Pfam" id="PF12807">
    <property type="entry name" value="eIF3_p135"/>
    <property type="match status" value="1"/>
</dbReference>
<dbReference type="Pfam" id="PF05303">
    <property type="entry name" value="GSKIP_dom"/>
    <property type="match status" value="1"/>
</dbReference>
<dbReference type="Pfam" id="PF13374">
    <property type="entry name" value="TPR_10"/>
    <property type="match status" value="1"/>
</dbReference>
<dbReference type="Pfam" id="PF13424">
    <property type="entry name" value="TPR_12"/>
    <property type="match status" value="1"/>
</dbReference>
<dbReference type="SUPFAM" id="SSF103107">
    <property type="entry name" value="Hypothetical protein c14orf129, hspc210"/>
    <property type="match status" value="1"/>
</dbReference>
<dbReference type="SUPFAM" id="SSF48452">
    <property type="entry name" value="TPR-like"/>
    <property type="match status" value="2"/>
</dbReference>
<dbReference type="PROSITE" id="PS51823">
    <property type="entry name" value="CLU"/>
    <property type="match status" value="1"/>
</dbReference>
<name>CLU_DROER</name>
<accession>B3NPV8</accession>
<keyword id="KW-0963">Cytoplasm</keyword>
<keyword id="KW-0597">Phosphoprotein</keyword>
<comment type="function">
    <text evidence="2">mRNA-binding protein involved in proper cytoplasmic distribution of mitochondria.</text>
</comment>
<comment type="subcellular location">
    <subcellularLocation>
        <location evidence="2">Cytoplasm</location>
    </subcellularLocation>
</comment>
<comment type="similarity">
    <text evidence="2">Belongs to the CLU family.</text>
</comment>
<evidence type="ECO:0000250" key="1"/>
<evidence type="ECO:0000255" key="2">
    <source>
        <dbReference type="HAMAP-Rule" id="MF_03013"/>
    </source>
</evidence>
<evidence type="ECO:0000255" key="3">
    <source>
        <dbReference type="PROSITE-ProRule" id="PRU01167"/>
    </source>
</evidence>
<evidence type="ECO:0000256" key="4">
    <source>
        <dbReference type="SAM" id="MobiDB-lite"/>
    </source>
</evidence>
<proteinExistence type="inferred from homology"/>
<reference key="1">
    <citation type="journal article" date="2007" name="Nature">
        <title>Evolution of genes and genomes on the Drosophila phylogeny.</title>
        <authorList>
            <consortium name="Drosophila 12 genomes consortium"/>
        </authorList>
    </citation>
    <scope>NUCLEOTIDE SEQUENCE [LARGE SCALE GENOMIC DNA]</scope>
    <source>
        <strain>Tucson 14021-0224.01</strain>
    </source>
</reference>
<gene>
    <name evidence="2" type="primary">clu</name>
    <name type="ORF">GG20578</name>
</gene>
<sequence>MALETEAKNSNATATSDATATKASGKAKETNNTAGGKKNLNPIPNSNHQNSNQNLVNGNGTAADGPAAKKKGKKNRNKSPPEPTTEAVLSNGHAEKSTLVDAVEDNADADANANVEKPEDGGAPDAEADGEDIDLDALQDVGITVNISSPGADLLCVQLSSMELVQEIHQLLMDREETCHRTCFSLQLDNATLDNFAELKAISNLEQGSTIKVVEEPYTMREARIHVRHVRDLLKNLDPADAYNGIDCTSLTYLNTITQGDLLDKKKTRPDSVDCTPPEYVTPGVSEPPLLPLHPNVKNAKGPQALKVLTTSAWNPPPGPRKLHGDLMYLYVVTMEEKRFHISACSKGFYINQSTDDTFNPKPDNPSHLSHSLIDLLSHISPSFRRAFQTIQKRRTMRHAFERVATPYQVYQWASPTLEHTVDAIRAEDAFSSKLGYEEHIPGQTRDWNEELQTTRELPRKTLPERLLRERAIFKVHGDFVTAATRGAMAVIDGNVLAINPGEDPKMQMFIWNNIFFSLGFDVRDHYKELGGDAAAFVAPRYDLHGVRVYNAVDVEGLYTLGTVVIDYRGYRVTAQSIIPGILEREQEQSVVYGSIDFGKTVLSHPKYLELLRQAGKHLKILPHAVLNERDEPVELCSSVECKGIIGNDGRHYILDLLRTFPPDVNFLKLQDVQLSKELVDMGFPIEHRHKLCCLRQELLEAFIEDRHVSFIRIAAVHLQQLNAKKQSEKAEGNPVPALEGAEAVSKVNGADKTDVKEEKNEENEKAQSTAGDTKTAEAMVNAIREAQSNVATSNEVQAAEVVKRACAAVGSLKEKEFDFRFNPDVFSPGIRHVDGEEGTCSSLAKQKVLVQEAAEFLVLKQIPAFVKEHMTHSSPPIDGQSLTESLHSHGINVRYLGKVIKILNQMPRMDYLHRIAVLELIVRATKHIYYTYMQNTEPLHLSAAISHFLNCLLTNGPVNPAVSSEEAHKKRGNGGKHNKHKSSKGGKGQQQQQATGNQNGSSSGSSNGSSVSDWTLMTPRSLWQQIRKEAKVYWDWELDCDSIETAVSKYGILRISLLRAFCLKVGIQVLLREYNFESKHKPTFGDDDIVNVFPVVKHISPRATDAYNFYTTGQAKIQQGMFKEGYELISGALNLLNNVFGALHQENGSCLRMLARLSYLLGDAQDALAIQQRAVIMSERVNGMDHPSTILEYTHLSLYSFANGHVGMSLKLLYRARYLMVLICGEDHPEVALIDSNISLILHALGEYELSLRFIEHALKLNLKYFGDKAMPVALSYHLMARTQSCMGDFRSALNNEKETYSFYKSQLGENHEKTKDSAECLRLLTQQAVLLQRKMNDIYSSGKLTSDLPPIHITPPSMGSVLDMLNTINGILFVKISRKDIVKVRSEIEKHFKADSPENEVNDAISSIVAAANNNGEAEDAVPKDVEEQKEAGTQLTNGEKAAATEATSS</sequence>
<protein>
    <recommendedName>
        <fullName evidence="2">Protein clueless</fullName>
    </recommendedName>
    <alternativeName>
        <fullName evidence="2">Clustered mitochondria protein homolog</fullName>
    </alternativeName>
</protein>
<organism>
    <name type="scientific">Drosophila erecta</name>
    <name type="common">Fruit fly</name>
    <dbReference type="NCBI Taxonomy" id="7220"/>
    <lineage>
        <taxon>Eukaryota</taxon>
        <taxon>Metazoa</taxon>
        <taxon>Ecdysozoa</taxon>
        <taxon>Arthropoda</taxon>
        <taxon>Hexapoda</taxon>
        <taxon>Insecta</taxon>
        <taxon>Pterygota</taxon>
        <taxon>Neoptera</taxon>
        <taxon>Endopterygota</taxon>
        <taxon>Diptera</taxon>
        <taxon>Brachycera</taxon>
        <taxon>Muscomorpha</taxon>
        <taxon>Ephydroidea</taxon>
        <taxon>Drosophilidae</taxon>
        <taxon>Drosophila</taxon>
        <taxon>Sophophora</taxon>
    </lineage>
</organism>
<feature type="chain" id="PRO_0000366380" description="Protein clueless">
    <location>
        <begin position="1"/>
        <end position="1452"/>
    </location>
</feature>
<feature type="domain" description="Clu" evidence="3">
    <location>
        <begin position="426"/>
        <end position="668"/>
    </location>
</feature>
<feature type="region of interest" description="Disordered" evidence="4">
    <location>
        <begin position="1"/>
        <end position="93"/>
    </location>
</feature>
<feature type="region of interest" description="Disordered" evidence="4">
    <location>
        <begin position="266"/>
        <end position="288"/>
    </location>
</feature>
<feature type="region of interest" description="Disordered" evidence="4">
    <location>
        <begin position="726"/>
        <end position="775"/>
    </location>
</feature>
<feature type="region of interest" description="Disordered" evidence="4">
    <location>
        <begin position="962"/>
        <end position="1013"/>
    </location>
</feature>
<feature type="region of interest" description="Disordered" evidence="4">
    <location>
        <begin position="1414"/>
        <end position="1452"/>
    </location>
</feature>
<feature type="compositionally biased region" description="Low complexity" evidence="4">
    <location>
        <begin position="8"/>
        <end position="24"/>
    </location>
</feature>
<feature type="compositionally biased region" description="Polar residues" evidence="4">
    <location>
        <begin position="42"/>
        <end position="59"/>
    </location>
</feature>
<feature type="compositionally biased region" description="Basic residues" evidence="4">
    <location>
        <begin position="68"/>
        <end position="77"/>
    </location>
</feature>
<feature type="compositionally biased region" description="Basic and acidic residues" evidence="4">
    <location>
        <begin position="750"/>
        <end position="766"/>
    </location>
</feature>
<feature type="compositionally biased region" description="Basic residues" evidence="4">
    <location>
        <begin position="970"/>
        <end position="985"/>
    </location>
</feature>
<feature type="compositionally biased region" description="Low complexity" evidence="4">
    <location>
        <begin position="990"/>
        <end position="1013"/>
    </location>
</feature>
<feature type="compositionally biased region" description="Basic and acidic residues" evidence="4">
    <location>
        <begin position="1423"/>
        <end position="1433"/>
    </location>
</feature>
<feature type="modified residue" description="Phosphoserine" evidence="1">
    <location>
        <position position="272"/>
    </location>
</feature>